<feature type="chain" id="PRO_0000410194" description="Serine/threonine-protein kinase ATG1">
    <location>
        <begin position="1"/>
        <end position="988"/>
    </location>
</feature>
<feature type="domain" description="Protein kinase" evidence="2">
    <location>
        <begin position="27"/>
        <end position="346"/>
    </location>
</feature>
<feature type="region of interest" description="Disordered" evidence="4">
    <location>
        <begin position="1"/>
        <end position="21"/>
    </location>
</feature>
<feature type="region of interest" description="Disordered" evidence="4">
    <location>
        <begin position="394"/>
        <end position="561"/>
    </location>
</feature>
<feature type="compositionally biased region" description="Low complexity" evidence="4">
    <location>
        <begin position="418"/>
        <end position="431"/>
    </location>
</feature>
<feature type="compositionally biased region" description="Pro residues" evidence="4">
    <location>
        <begin position="449"/>
        <end position="463"/>
    </location>
</feature>
<feature type="compositionally biased region" description="Polar residues" evidence="4">
    <location>
        <begin position="468"/>
        <end position="478"/>
    </location>
</feature>
<feature type="active site" description="Proton acceptor" evidence="2 3">
    <location>
        <position position="183"/>
    </location>
</feature>
<feature type="binding site" evidence="2">
    <location>
        <begin position="33"/>
        <end position="41"/>
    </location>
    <ligand>
        <name>ATP</name>
        <dbReference type="ChEBI" id="CHEBI:30616"/>
    </ligand>
</feature>
<feature type="binding site" evidence="2">
    <location>
        <position position="56"/>
    </location>
    <ligand>
        <name>ATP</name>
        <dbReference type="ChEBI" id="CHEBI:30616"/>
    </ligand>
</feature>
<name>ATG1_CRYNB</name>
<accession>P0CP71</accession>
<accession>Q55MD9</accession>
<accession>Q5K8D3</accession>
<sequence length="988" mass="107295">MPDSNAQGSREKESGHHRSHKERIGNYVVGAEIGRGSFATVYKGYRSKTRVPIAIKAVSRQKLTSKLLENLESEINILKVINHRNIVALTDCFKNDTHIYLVMEYCSGSDLSVYIKQRGNIPTLDFVPKAGSSMALLPTNDEGKIYWPHPPTGGLDERVTRSFLGQLAQAIKFLRAQDLMHRDIKPQNLLLQPATETEVAEGHPYGIPVLKVADFGFARILPAAAMAETLCGSPLYMAPEILRYEKYDAKADLWSVGAVLFEMSVGRPPFRANNHVELLRRIEKSNDNIVFPDEKERDSKSSDETSIPVPSDIKALIRALLKRKPNDRMGFDDFFNCGVWDGHMAESTEEESLSLDVSTDSSAGLGESDRIRQMVASTEQSKDRLIPTRAPQPLAADAALNPQPAVPISRDTSEGRSRLSTPPSRPTPTRRSTPKYYVGDATPSEPTAIIPPSPSSAPTPTSAPDPGLTTQQSPTSRANPRPIITAASSAQRRMSGKGDGREASSVEEAAPITPPFTGPSPTMARPSRGINEGSPLAAAPPITMGPDGRLERSSALEGSTSGVGTDYVVVEKQTVEINALADELDQASKRPMIRRSSRGSVVSRPVSSFKPISPNITKNDPTLGAISYSPPFALSSTPPFAMQVPRHASGGNSFPRNPSIPSSLNAFPPTTISASPSYGQDAAARFGVSPGSLQTGALARALTNTAIRLIGTSANTAATAIARATAKRRPNIVRVSDMDAAEDDLLCTVEDLARKAFVLFELADERLLAQTQLAQTARTSSTPTGLTGTTPPFSMQAAAAAQAGSRRKSSSSSMNSEVWILRQQEAAANDAVVLYMKSLAFIVKAMDKVKRYWKNRTDVYDGYVASQELNEMGQWLRARFNETFEKAEWAKTQAGDTLLFPDWLVHDKARDTSRQAAVAELQGDLTTAEQGYETSLWLLQALLDESVYENGSIPDEDKVAYERLMVPIKTRLDALRKKLAESSGMTAR</sequence>
<protein>
    <recommendedName>
        <fullName evidence="1">Serine/threonine-protein kinase ATG1</fullName>
        <ecNumber evidence="1">2.7.11.1</ecNumber>
    </recommendedName>
    <alternativeName>
        <fullName evidence="1">Autophagy-related protein 1</fullName>
    </alternativeName>
</protein>
<dbReference type="EC" id="2.7.11.1" evidence="1"/>
<dbReference type="EMBL" id="AAEY01000044">
    <property type="protein sequence ID" value="EAL18812.1"/>
    <property type="molecule type" value="Genomic_DNA"/>
</dbReference>
<dbReference type="RefSeq" id="XP_773459.1">
    <property type="nucleotide sequence ID" value="XM_768366.1"/>
</dbReference>
<dbReference type="SMR" id="P0CP71"/>
<dbReference type="GeneID" id="4938026"/>
<dbReference type="KEGG" id="cnb:CNBI0730"/>
<dbReference type="VEuPathDB" id="FungiDB:CNBI0730"/>
<dbReference type="HOGENOM" id="CLU_006447_0_0_1"/>
<dbReference type="OrthoDB" id="6537at5206"/>
<dbReference type="GO" id="GO:0005776">
    <property type="term" value="C:autophagosome"/>
    <property type="evidence" value="ECO:0007669"/>
    <property type="project" value="TreeGrafter"/>
</dbReference>
<dbReference type="GO" id="GO:0005829">
    <property type="term" value="C:cytosol"/>
    <property type="evidence" value="ECO:0007669"/>
    <property type="project" value="TreeGrafter"/>
</dbReference>
<dbReference type="GO" id="GO:0034045">
    <property type="term" value="C:phagophore assembly site membrane"/>
    <property type="evidence" value="ECO:0007669"/>
    <property type="project" value="UniProtKB-SubCell"/>
</dbReference>
<dbReference type="GO" id="GO:0005524">
    <property type="term" value="F:ATP binding"/>
    <property type="evidence" value="ECO:0007669"/>
    <property type="project" value="UniProtKB-KW"/>
</dbReference>
<dbReference type="GO" id="GO:0106310">
    <property type="term" value="F:protein serine kinase activity"/>
    <property type="evidence" value="ECO:0007669"/>
    <property type="project" value="RHEA"/>
</dbReference>
<dbReference type="GO" id="GO:0004674">
    <property type="term" value="F:protein serine/threonine kinase activity"/>
    <property type="evidence" value="ECO:0007669"/>
    <property type="project" value="UniProtKB-KW"/>
</dbReference>
<dbReference type="GO" id="GO:0000045">
    <property type="term" value="P:autophagosome assembly"/>
    <property type="evidence" value="ECO:0007669"/>
    <property type="project" value="TreeGrafter"/>
</dbReference>
<dbReference type="GO" id="GO:0000422">
    <property type="term" value="P:autophagy of mitochondrion"/>
    <property type="evidence" value="ECO:0007669"/>
    <property type="project" value="TreeGrafter"/>
</dbReference>
<dbReference type="GO" id="GO:0034727">
    <property type="term" value="P:piecemeal microautophagy of the nucleus"/>
    <property type="evidence" value="ECO:0007669"/>
    <property type="project" value="TreeGrafter"/>
</dbReference>
<dbReference type="GO" id="GO:0015031">
    <property type="term" value="P:protein transport"/>
    <property type="evidence" value="ECO:0007669"/>
    <property type="project" value="UniProtKB-KW"/>
</dbReference>
<dbReference type="GO" id="GO:0010506">
    <property type="term" value="P:regulation of autophagy"/>
    <property type="evidence" value="ECO:0007669"/>
    <property type="project" value="InterPro"/>
</dbReference>
<dbReference type="GO" id="GO:0042594">
    <property type="term" value="P:response to starvation"/>
    <property type="evidence" value="ECO:0007669"/>
    <property type="project" value="TreeGrafter"/>
</dbReference>
<dbReference type="GO" id="GO:0061709">
    <property type="term" value="P:reticulophagy"/>
    <property type="evidence" value="ECO:0007669"/>
    <property type="project" value="TreeGrafter"/>
</dbReference>
<dbReference type="CDD" id="cd14009">
    <property type="entry name" value="STKc_ATG1_ULK_like"/>
    <property type="match status" value="1"/>
</dbReference>
<dbReference type="FunFam" id="1.10.510.10:FF:000915">
    <property type="entry name" value="Serine/threonine-protein kinase ATG1"/>
    <property type="match status" value="1"/>
</dbReference>
<dbReference type="FunFam" id="3.30.200.20:FF:000399">
    <property type="entry name" value="Serine/threonine-protein kinase atg1"/>
    <property type="match status" value="1"/>
</dbReference>
<dbReference type="Gene3D" id="3.30.200.20">
    <property type="entry name" value="Phosphorylase Kinase, domain 1"/>
    <property type="match status" value="1"/>
</dbReference>
<dbReference type="Gene3D" id="1.10.510.10">
    <property type="entry name" value="Transferase(Phosphotransferase) domain 1"/>
    <property type="match status" value="1"/>
</dbReference>
<dbReference type="InterPro" id="IPR045269">
    <property type="entry name" value="Atg1-like"/>
</dbReference>
<dbReference type="InterPro" id="IPR048941">
    <property type="entry name" value="ATG1-like_MIT2"/>
</dbReference>
<dbReference type="InterPro" id="IPR022708">
    <property type="entry name" value="Atg1-like_tMIT"/>
</dbReference>
<dbReference type="InterPro" id="IPR011009">
    <property type="entry name" value="Kinase-like_dom_sf"/>
</dbReference>
<dbReference type="InterPro" id="IPR000719">
    <property type="entry name" value="Prot_kinase_dom"/>
</dbReference>
<dbReference type="InterPro" id="IPR017441">
    <property type="entry name" value="Protein_kinase_ATP_BS"/>
</dbReference>
<dbReference type="InterPro" id="IPR008271">
    <property type="entry name" value="Ser/Thr_kinase_AS"/>
</dbReference>
<dbReference type="PANTHER" id="PTHR24348:SF22">
    <property type="entry name" value="NON-SPECIFIC SERINE_THREONINE PROTEIN KINASE"/>
    <property type="match status" value="1"/>
</dbReference>
<dbReference type="PANTHER" id="PTHR24348">
    <property type="entry name" value="SERINE/THREONINE-PROTEIN KINASE UNC-51-RELATED"/>
    <property type="match status" value="1"/>
</dbReference>
<dbReference type="Pfam" id="PF12063">
    <property type="entry name" value="ATG1-like_MIT1"/>
    <property type="match status" value="1"/>
</dbReference>
<dbReference type="Pfam" id="PF21127">
    <property type="entry name" value="ATG1-like_MIT2"/>
    <property type="match status" value="1"/>
</dbReference>
<dbReference type="Pfam" id="PF00069">
    <property type="entry name" value="Pkinase"/>
    <property type="match status" value="1"/>
</dbReference>
<dbReference type="SMART" id="SM00220">
    <property type="entry name" value="S_TKc"/>
    <property type="match status" value="1"/>
</dbReference>
<dbReference type="SUPFAM" id="SSF56112">
    <property type="entry name" value="Protein kinase-like (PK-like)"/>
    <property type="match status" value="1"/>
</dbReference>
<dbReference type="PROSITE" id="PS00107">
    <property type="entry name" value="PROTEIN_KINASE_ATP"/>
    <property type="match status" value="1"/>
</dbReference>
<dbReference type="PROSITE" id="PS50011">
    <property type="entry name" value="PROTEIN_KINASE_DOM"/>
    <property type="match status" value="1"/>
</dbReference>
<dbReference type="PROSITE" id="PS00108">
    <property type="entry name" value="PROTEIN_KINASE_ST"/>
    <property type="match status" value="1"/>
</dbReference>
<comment type="function">
    <text evidence="1">Serine/threonine protein kinase involved in the cytoplasm to vacuole transport (Cvt) and found to be essential in autophagy, where it is required for the formation of autophagosomes. Involved in the clearance of protein aggregates which cannot be efficiently cleared by the proteasome. Required for selective autophagic degradation of the nucleus (nucleophagy) as well as for mitophagy which contributes to regulate mitochondrial quantity and quality by eliminating the mitochondria to a basal level to fulfill cellular energy requirements and preventing excess ROS production. Also involved in endoplasmic reticulum-specific autophagic process, in selective removal of ER-associated degradation (ERAD) substrates. Plays a key role in ATG9 and ATG23 cycling through the pre-autophagosomal structure and is necessary to promote ATG18 binding to ATG9 through phosphorylation of ATG9. Catalyzes phosphorylation of ATG4, decreasing the interaction between ATG4 and ATG8 and impairing deconjugation of PE-conjugated forms of ATG8.</text>
</comment>
<comment type="catalytic activity">
    <reaction evidence="1">
        <text>L-seryl-[protein] + ATP = O-phospho-L-seryl-[protein] + ADP + H(+)</text>
        <dbReference type="Rhea" id="RHEA:17989"/>
        <dbReference type="Rhea" id="RHEA-COMP:9863"/>
        <dbReference type="Rhea" id="RHEA-COMP:11604"/>
        <dbReference type="ChEBI" id="CHEBI:15378"/>
        <dbReference type="ChEBI" id="CHEBI:29999"/>
        <dbReference type="ChEBI" id="CHEBI:30616"/>
        <dbReference type="ChEBI" id="CHEBI:83421"/>
        <dbReference type="ChEBI" id="CHEBI:456216"/>
        <dbReference type="EC" id="2.7.11.1"/>
    </reaction>
</comment>
<comment type="catalytic activity">
    <reaction evidence="1">
        <text>L-threonyl-[protein] + ATP = O-phospho-L-threonyl-[protein] + ADP + H(+)</text>
        <dbReference type="Rhea" id="RHEA:46608"/>
        <dbReference type="Rhea" id="RHEA-COMP:11060"/>
        <dbReference type="Rhea" id="RHEA-COMP:11605"/>
        <dbReference type="ChEBI" id="CHEBI:15378"/>
        <dbReference type="ChEBI" id="CHEBI:30013"/>
        <dbReference type="ChEBI" id="CHEBI:30616"/>
        <dbReference type="ChEBI" id="CHEBI:61977"/>
        <dbReference type="ChEBI" id="CHEBI:456216"/>
        <dbReference type="EC" id="2.7.11.1"/>
    </reaction>
</comment>
<comment type="subunit">
    <text evidence="1">Homodimer. Forms a ternary complex with ATG13 and ATG17.</text>
</comment>
<comment type="subcellular location">
    <subcellularLocation>
        <location evidence="1">Cytoplasm</location>
    </subcellularLocation>
    <subcellularLocation>
        <location evidence="1">Preautophagosomal structure membrane</location>
        <topology evidence="1">Peripheral membrane protein</topology>
    </subcellularLocation>
</comment>
<comment type="similarity">
    <text evidence="2">Belongs to the protein kinase superfamily. Ser/Thr protein kinase family. APG1/unc-51/ULK1 subfamily.</text>
</comment>
<organism>
    <name type="scientific">Cryptococcus neoformans var. neoformans serotype D (strain B-3501A)</name>
    <name type="common">Filobasidiella neoformans</name>
    <dbReference type="NCBI Taxonomy" id="283643"/>
    <lineage>
        <taxon>Eukaryota</taxon>
        <taxon>Fungi</taxon>
        <taxon>Dikarya</taxon>
        <taxon>Basidiomycota</taxon>
        <taxon>Agaricomycotina</taxon>
        <taxon>Tremellomycetes</taxon>
        <taxon>Tremellales</taxon>
        <taxon>Cryptococcaceae</taxon>
        <taxon>Cryptococcus</taxon>
        <taxon>Cryptococcus neoformans species complex</taxon>
    </lineage>
</organism>
<reference key="1">
    <citation type="journal article" date="2005" name="Science">
        <title>The genome of the basidiomycetous yeast and human pathogen Cryptococcus neoformans.</title>
        <authorList>
            <person name="Loftus B.J."/>
            <person name="Fung E."/>
            <person name="Roncaglia P."/>
            <person name="Rowley D."/>
            <person name="Amedeo P."/>
            <person name="Bruno D."/>
            <person name="Vamathevan J."/>
            <person name="Miranda M."/>
            <person name="Anderson I.J."/>
            <person name="Fraser J.A."/>
            <person name="Allen J.E."/>
            <person name="Bosdet I.E."/>
            <person name="Brent M.R."/>
            <person name="Chiu R."/>
            <person name="Doering T.L."/>
            <person name="Donlin M.J."/>
            <person name="D'Souza C.A."/>
            <person name="Fox D.S."/>
            <person name="Grinberg V."/>
            <person name="Fu J."/>
            <person name="Fukushima M."/>
            <person name="Haas B.J."/>
            <person name="Huang J.C."/>
            <person name="Janbon G."/>
            <person name="Jones S.J.M."/>
            <person name="Koo H.L."/>
            <person name="Krzywinski M.I."/>
            <person name="Kwon-Chung K.J."/>
            <person name="Lengeler K.B."/>
            <person name="Maiti R."/>
            <person name="Marra M.A."/>
            <person name="Marra R.E."/>
            <person name="Mathewson C.A."/>
            <person name="Mitchell T.G."/>
            <person name="Pertea M."/>
            <person name="Riggs F.R."/>
            <person name="Salzberg S.L."/>
            <person name="Schein J.E."/>
            <person name="Shvartsbeyn A."/>
            <person name="Shin H."/>
            <person name="Shumway M."/>
            <person name="Specht C.A."/>
            <person name="Suh B.B."/>
            <person name="Tenney A."/>
            <person name="Utterback T.R."/>
            <person name="Wickes B.L."/>
            <person name="Wortman J.R."/>
            <person name="Wye N.H."/>
            <person name="Kronstad J.W."/>
            <person name="Lodge J.K."/>
            <person name="Heitman J."/>
            <person name="Davis R.W."/>
            <person name="Fraser C.M."/>
            <person name="Hyman R.W."/>
        </authorList>
    </citation>
    <scope>NUCLEOTIDE SEQUENCE [LARGE SCALE GENOMIC DNA]</scope>
    <source>
        <strain>B-3501A</strain>
    </source>
</reference>
<evidence type="ECO:0000250" key="1">
    <source>
        <dbReference type="UniProtKB" id="P53104"/>
    </source>
</evidence>
<evidence type="ECO:0000255" key="2">
    <source>
        <dbReference type="PROSITE-ProRule" id="PRU00159"/>
    </source>
</evidence>
<evidence type="ECO:0000255" key="3">
    <source>
        <dbReference type="PROSITE-ProRule" id="PRU10027"/>
    </source>
</evidence>
<evidence type="ECO:0000256" key="4">
    <source>
        <dbReference type="SAM" id="MobiDB-lite"/>
    </source>
</evidence>
<evidence type="ECO:0000303" key="5">
    <source>
    </source>
</evidence>
<proteinExistence type="inferred from homology"/>
<gene>
    <name evidence="1" type="primary">ATG1</name>
    <name evidence="5" type="ordered locus">CNBI0730</name>
</gene>
<keyword id="KW-0067">ATP-binding</keyword>
<keyword id="KW-0072">Autophagy</keyword>
<keyword id="KW-0963">Cytoplasm</keyword>
<keyword id="KW-0418">Kinase</keyword>
<keyword id="KW-0472">Membrane</keyword>
<keyword id="KW-0547">Nucleotide-binding</keyword>
<keyword id="KW-0653">Protein transport</keyword>
<keyword id="KW-0723">Serine/threonine-protein kinase</keyword>
<keyword id="KW-0808">Transferase</keyword>
<keyword id="KW-0813">Transport</keyword>